<gene>
    <name evidence="1" type="primary">queA</name>
    <name type="ordered locus">MCA0688</name>
</gene>
<proteinExistence type="inferred from homology"/>
<name>QUEA_METCA</name>
<evidence type="ECO:0000255" key="1">
    <source>
        <dbReference type="HAMAP-Rule" id="MF_00113"/>
    </source>
</evidence>
<keyword id="KW-0963">Cytoplasm</keyword>
<keyword id="KW-0671">Queuosine biosynthesis</keyword>
<keyword id="KW-1185">Reference proteome</keyword>
<keyword id="KW-0949">S-adenosyl-L-methionine</keyword>
<keyword id="KW-0808">Transferase</keyword>
<reference key="1">
    <citation type="journal article" date="2004" name="PLoS Biol.">
        <title>Genomic insights into methanotrophy: the complete genome sequence of Methylococcus capsulatus (Bath).</title>
        <authorList>
            <person name="Ward N.L."/>
            <person name="Larsen O."/>
            <person name="Sakwa J."/>
            <person name="Bruseth L."/>
            <person name="Khouri H.M."/>
            <person name="Durkin A.S."/>
            <person name="Dimitrov G."/>
            <person name="Jiang L."/>
            <person name="Scanlan D."/>
            <person name="Kang K.H."/>
            <person name="Lewis M.R."/>
            <person name="Nelson K.E."/>
            <person name="Methe B.A."/>
            <person name="Wu M."/>
            <person name="Heidelberg J.F."/>
            <person name="Paulsen I.T."/>
            <person name="Fouts D.E."/>
            <person name="Ravel J."/>
            <person name="Tettelin H."/>
            <person name="Ren Q."/>
            <person name="Read T.D."/>
            <person name="DeBoy R.T."/>
            <person name="Seshadri R."/>
            <person name="Salzberg S.L."/>
            <person name="Jensen H.B."/>
            <person name="Birkeland N.K."/>
            <person name="Nelson W.C."/>
            <person name="Dodson R.J."/>
            <person name="Grindhaug S.H."/>
            <person name="Holt I.E."/>
            <person name="Eidhammer I."/>
            <person name="Jonasen I."/>
            <person name="Vanaken S."/>
            <person name="Utterback T.R."/>
            <person name="Feldblyum T.V."/>
            <person name="Fraser C.M."/>
            <person name="Lillehaug J.R."/>
            <person name="Eisen J.A."/>
        </authorList>
    </citation>
    <scope>NUCLEOTIDE SEQUENCE [LARGE SCALE GENOMIC DNA]</scope>
    <source>
        <strain>ATCC 33009 / NCIMB 11132 / Bath</strain>
    </source>
</reference>
<comment type="function">
    <text evidence="1">Transfers and isomerizes the ribose moiety from AdoMet to the 7-aminomethyl group of 7-deazaguanine (preQ1-tRNA) to give epoxyqueuosine (oQ-tRNA).</text>
</comment>
<comment type="catalytic activity">
    <reaction evidence="1">
        <text>7-aminomethyl-7-carbaguanosine(34) in tRNA + S-adenosyl-L-methionine = epoxyqueuosine(34) in tRNA + adenine + L-methionine + 2 H(+)</text>
        <dbReference type="Rhea" id="RHEA:32155"/>
        <dbReference type="Rhea" id="RHEA-COMP:10342"/>
        <dbReference type="Rhea" id="RHEA-COMP:18582"/>
        <dbReference type="ChEBI" id="CHEBI:15378"/>
        <dbReference type="ChEBI" id="CHEBI:16708"/>
        <dbReference type="ChEBI" id="CHEBI:57844"/>
        <dbReference type="ChEBI" id="CHEBI:59789"/>
        <dbReference type="ChEBI" id="CHEBI:82833"/>
        <dbReference type="ChEBI" id="CHEBI:194443"/>
        <dbReference type="EC" id="2.4.99.17"/>
    </reaction>
</comment>
<comment type="pathway">
    <text evidence="1">tRNA modification; tRNA-queuosine biosynthesis.</text>
</comment>
<comment type="subunit">
    <text evidence="1">Monomer.</text>
</comment>
<comment type="subcellular location">
    <subcellularLocation>
        <location evidence="1">Cytoplasm</location>
    </subcellularLocation>
</comment>
<comment type="similarity">
    <text evidence="1">Belongs to the QueA family.</text>
</comment>
<organism>
    <name type="scientific">Methylococcus capsulatus (strain ATCC 33009 / NCIMB 11132 / Bath)</name>
    <dbReference type="NCBI Taxonomy" id="243233"/>
    <lineage>
        <taxon>Bacteria</taxon>
        <taxon>Pseudomonadati</taxon>
        <taxon>Pseudomonadota</taxon>
        <taxon>Gammaproteobacteria</taxon>
        <taxon>Methylococcales</taxon>
        <taxon>Methylococcaceae</taxon>
        <taxon>Methylococcus</taxon>
    </lineage>
</organism>
<protein>
    <recommendedName>
        <fullName evidence="1">S-adenosylmethionine:tRNA ribosyltransferase-isomerase</fullName>
        <ecNumber evidence="1">2.4.99.17</ecNumber>
    </recommendedName>
    <alternativeName>
        <fullName evidence="1">Queuosine biosynthesis protein QueA</fullName>
    </alternativeName>
</protein>
<feature type="chain" id="PRO_0000231349" description="S-adenosylmethionine:tRNA ribosyltransferase-isomerase">
    <location>
        <begin position="1"/>
        <end position="347"/>
    </location>
</feature>
<sequence>MLKSEFHYDLPQNLIAQSPLPERSASRLLCLDGATGALEDKSFRDIEKLLRPGDLLVFNDTRVLPARLFGRKETGGAVEILLERLLGERLMLAHVRASKAPRPGTWLALEAEHRVRVVERDGDLFLLELAGEEPLQTVLEQIGHMPLPPYITRPDTSADLERYQTVYATRPGAVAAPTAGLHFDTELLGRLRGAGIDMARVTLHVGAGTFQPVRTENLEDHRMHAEYCEVGPEVVKAVERARGRGGRVVAVGTTSMRSLETAASGGSLRTFSGETRLFIKPGFRFNCVDALVTNFHLPESTLLVLVCAFAGHRETLAAYRHAIAQAYRFFSYGDAMFVTPNEPAANR</sequence>
<accession>Q60AZ8</accession>
<dbReference type="EC" id="2.4.99.17" evidence="1"/>
<dbReference type="EMBL" id="AE017282">
    <property type="protein sequence ID" value="AAU93180.1"/>
    <property type="molecule type" value="Genomic_DNA"/>
</dbReference>
<dbReference type="RefSeq" id="WP_010960027.1">
    <property type="nucleotide sequence ID" value="NC_002977.6"/>
</dbReference>
<dbReference type="SMR" id="Q60AZ8"/>
<dbReference type="STRING" id="243233.MCA0688"/>
<dbReference type="GeneID" id="88223008"/>
<dbReference type="KEGG" id="mca:MCA0688"/>
<dbReference type="eggNOG" id="COG0809">
    <property type="taxonomic scope" value="Bacteria"/>
</dbReference>
<dbReference type="HOGENOM" id="CLU_039110_1_0_6"/>
<dbReference type="UniPathway" id="UPA00392"/>
<dbReference type="Proteomes" id="UP000006821">
    <property type="component" value="Chromosome"/>
</dbReference>
<dbReference type="GO" id="GO:0005737">
    <property type="term" value="C:cytoplasm"/>
    <property type="evidence" value="ECO:0007669"/>
    <property type="project" value="UniProtKB-SubCell"/>
</dbReference>
<dbReference type="GO" id="GO:0051075">
    <property type="term" value="F:S-adenosylmethionine:tRNA ribosyltransferase-isomerase activity"/>
    <property type="evidence" value="ECO:0007669"/>
    <property type="project" value="UniProtKB-EC"/>
</dbReference>
<dbReference type="GO" id="GO:0008616">
    <property type="term" value="P:queuosine biosynthetic process"/>
    <property type="evidence" value="ECO:0007669"/>
    <property type="project" value="UniProtKB-UniRule"/>
</dbReference>
<dbReference type="GO" id="GO:0002099">
    <property type="term" value="P:tRNA wobble guanine modification"/>
    <property type="evidence" value="ECO:0007669"/>
    <property type="project" value="TreeGrafter"/>
</dbReference>
<dbReference type="FunFam" id="3.40.1780.10:FF:000001">
    <property type="entry name" value="S-adenosylmethionine:tRNA ribosyltransferase-isomerase"/>
    <property type="match status" value="1"/>
</dbReference>
<dbReference type="Gene3D" id="2.40.10.240">
    <property type="entry name" value="QueA-like"/>
    <property type="match status" value="1"/>
</dbReference>
<dbReference type="Gene3D" id="3.40.1780.10">
    <property type="entry name" value="QueA-like"/>
    <property type="match status" value="1"/>
</dbReference>
<dbReference type="HAMAP" id="MF_00113">
    <property type="entry name" value="QueA"/>
    <property type="match status" value="1"/>
</dbReference>
<dbReference type="InterPro" id="IPR003699">
    <property type="entry name" value="QueA"/>
</dbReference>
<dbReference type="InterPro" id="IPR042118">
    <property type="entry name" value="QueA_dom1"/>
</dbReference>
<dbReference type="InterPro" id="IPR042119">
    <property type="entry name" value="QueA_dom2"/>
</dbReference>
<dbReference type="InterPro" id="IPR036100">
    <property type="entry name" value="QueA_sf"/>
</dbReference>
<dbReference type="NCBIfam" id="NF001140">
    <property type="entry name" value="PRK00147.1"/>
    <property type="match status" value="1"/>
</dbReference>
<dbReference type="NCBIfam" id="TIGR00113">
    <property type="entry name" value="queA"/>
    <property type="match status" value="1"/>
</dbReference>
<dbReference type="PANTHER" id="PTHR30307">
    <property type="entry name" value="S-ADENOSYLMETHIONINE:TRNA RIBOSYLTRANSFERASE-ISOMERASE"/>
    <property type="match status" value="1"/>
</dbReference>
<dbReference type="PANTHER" id="PTHR30307:SF0">
    <property type="entry name" value="S-ADENOSYLMETHIONINE:TRNA RIBOSYLTRANSFERASE-ISOMERASE"/>
    <property type="match status" value="1"/>
</dbReference>
<dbReference type="Pfam" id="PF02547">
    <property type="entry name" value="Queuosine_synth"/>
    <property type="match status" value="1"/>
</dbReference>
<dbReference type="SUPFAM" id="SSF111337">
    <property type="entry name" value="QueA-like"/>
    <property type="match status" value="1"/>
</dbReference>